<evidence type="ECO:0000255" key="1">
    <source>
        <dbReference type="HAMAP-Rule" id="MF_01659"/>
    </source>
</evidence>
<comment type="function">
    <text evidence="1">Catalyzes the thiamine diphosphate-dependent decarboxylation of 2-oxoglutarate and the subsequent addition of the resulting succinic semialdehyde-thiamine pyrophosphate anion to isochorismate to yield 2-succinyl-5-enolpyruvyl-6-hydroxy-3-cyclohexene-1-carboxylate (SEPHCHC).</text>
</comment>
<comment type="catalytic activity">
    <reaction evidence="1">
        <text>isochorismate + 2-oxoglutarate + H(+) = 5-enolpyruvoyl-6-hydroxy-2-succinyl-cyclohex-3-ene-1-carboxylate + CO2</text>
        <dbReference type="Rhea" id="RHEA:25593"/>
        <dbReference type="ChEBI" id="CHEBI:15378"/>
        <dbReference type="ChEBI" id="CHEBI:16526"/>
        <dbReference type="ChEBI" id="CHEBI:16810"/>
        <dbReference type="ChEBI" id="CHEBI:29780"/>
        <dbReference type="ChEBI" id="CHEBI:58818"/>
        <dbReference type="EC" id="2.2.1.9"/>
    </reaction>
</comment>
<comment type="cofactor">
    <cofactor evidence="1">
        <name>Mg(2+)</name>
        <dbReference type="ChEBI" id="CHEBI:18420"/>
    </cofactor>
    <cofactor evidence="1">
        <name>Mn(2+)</name>
        <dbReference type="ChEBI" id="CHEBI:29035"/>
    </cofactor>
</comment>
<comment type="cofactor">
    <cofactor evidence="1">
        <name>thiamine diphosphate</name>
        <dbReference type="ChEBI" id="CHEBI:58937"/>
    </cofactor>
    <text evidence="1">Binds 1 thiamine pyrophosphate per subunit.</text>
</comment>
<comment type="pathway">
    <text evidence="1">Quinol/quinone metabolism; 1,4-dihydroxy-2-naphthoate biosynthesis; 1,4-dihydroxy-2-naphthoate from chorismate: step 2/7.</text>
</comment>
<comment type="pathway">
    <text evidence="1">Quinol/quinone metabolism; menaquinone biosynthesis.</text>
</comment>
<comment type="subunit">
    <text evidence="1">Homodimer.</text>
</comment>
<comment type="similarity">
    <text evidence="1">Belongs to the TPP enzyme family. MenD subfamily.</text>
</comment>
<reference key="1">
    <citation type="journal article" date="2007" name="Genome Res.">
        <title>Reductive evolution and niche adaptation inferred from the genome of Mycobacterium ulcerans, the causative agent of Buruli ulcer.</title>
        <authorList>
            <person name="Stinear T.P."/>
            <person name="Seemann T."/>
            <person name="Pidot S."/>
            <person name="Frigui W."/>
            <person name="Reysset G."/>
            <person name="Garnier T."/>
            <person name="Meurice G."/>
            <person name="Simon D."/>
            <person name="Bouchier C."/>
            <person name="Ma L."/>
            <person name="Tichit M."/>
            <person name="Porter J.L."/>
            <person name="Ryan J."/>
            <person name="Johnson P.D.R."/>
            <person name="Davies J.K."/>
            <person name="Jenkin G.A."/>
            <person name="Small P.L.C."/>
            <person name="Jones L.M."/>
            <person name="Tekaia F."/>
            <person name="Laval F."/>
            <person name="Daffe M."/>
            <person name="Parkhill J."/>
            <person name="Cole S.T."/>
        </authorList>
    </citation>
    <scope>NUCLEOTIDE SEQUENCE [LARGE SCALE GENOMIC DNA]</scope>
    <source>
        <strain>Agy99</strain>
    </source>
</reference>
<keyword id="KW-0460">Magnesium</keyword>
<keyword id="KW-0464">Manganese</keyword>
<keyword id="KW-0474">Menaquinone biosynthesis</keyword>
<keyword id="KW-0479">Metal-binding</keyword>
<keyword id="KW-0786">Thiamine pyrophosphate</keyword>
<keyword id="KW-0808">Transferase</keyword>
<organism>
    <name type="scientific">Mycobacterium ulcerans (strain Agy99)</name>
    <dbReference type="NCBI Taxonomy" id="362242"/>
    <lineage>
        <taxon>Bacteria</taxon>
        <taxon>Bacillati</taxon>
        <taxon>Actinomycetota</taxon>
        <taxon>Actinomycetes</taxon>
        <taxon>Mycobacteriales</taxon>
        <taxon>Mycobacteriaceae</taxon>
        <taxon>Mycobacterium</taxon>
        <taxon>Mycobacterium ulcerans group</taxon>
    </lineage>
</organism>
<protein>
    <recommendedName>
        <fullName evidence="1">2-succinyl-5-enolpyruvyl-6-hydroxy-3-cyclohexene-1-carboxylate synthase</fullName>
        <shortName evidence="1">SEPHCHC synthase</shortName>
        <ecNumber evidence="1">2.2.1.9</ecNumber>
    </recommendedName>
    <alternativeName>
        <fullName evidence="1">Menaquinone biosynthesis protein MenD</fullName>
    </alternativeName>
</protein>
<sequence>MNPSTTQARVVVDELIRGGVRDVVLCPGSRNAPLAFALQDADRSGRIRLHVRIDERTAGFLAIGLAVGAGAPACVAMTSGTAVANLGPAVVETNYARVPLIVLSANRPYELLGTGANQTMEQLGYFGTQVRATISLGLAEDAHERLDSLNASWRSATCRMLAAAMGSRTANAGPVHFDIPLREPLVPDPDPHGAVTPPGRPEGRPWTYTPPVTFDQPLEIDLSADTVVIAGHGAGVHPNLVQLPTIAEPTAPAAPSGGNPLHPLALPLLRPRQVIMLGRPTLHRPVSALLADPEVPVFALTTGPRWPDVSGNSQATGTRAIVTGTPNPSWLDRCAQMNRHAVAAVREQLAAHPLTTGLHVAAAVAGALRPGDQLVLGASNPVRDAALVGLDTAGLRVRSNRGVAGIDGTVSTAIGAALGYERDHHGRTVALIGDLTFVHDSSGLLIGPTEPTPRQLTIVVSNDNGGGIFELLEQGDPRFSDVSSRIFGTPHDVDVGALCRAYHVENRQIEVDQLPAALDEPGSGLRVLEVKADRSSLRQLHAAIKAAL</sequence>
<name>MEND_MYCUA</name>
<feature type="chain" id="PRO_0000341787" description="2-succinyl-5-enolpyruvyl-6-hydroxy-3-cyclohexene-1-carboxylate synthase">
    <location>
        <begin position="1"/>
        <end position="548"/>
    </location>
</feature>
<proteinExistence type="inferred from homology"/>
<dbReference type="EC" id="2.2.1.9" evidence="1"/>
<dbReference type="EMBL" id="CP000325">
    <property type="protein sequence ID" value="ABL03318.1"/>
    <property type="molecule type" value="Genomic_DNA"/>
</dbReference>
<dbReference type="RefSeq" id="WP_011738943.1">
    <property type="nucleotide sequence ID" value="NC_008611.1"/>
</dbReference>
<dbReference type="SMR" id="A0PLU9"/>
<dbReference type="KEGG" id="mul:MUL_0654"/>
<dbReference type="eggNOG" id="COG1165">
    <property type="taxonomic scope" value="Bacteria"/>
</dbReference>
<dbReference type="HOGENOM" id="CLU_006051_4_1_11"/>
<dbReference type="UniPathway" id="UPA00079"/>
<dbReference type="UniPathway" id="UPA01057">
    <property type="reaction ID" value="UER00164"/>
</dbReference>
<dbReference type="Proteomes" id="UP000000765">
    <property type="component" value="Chromosome"/>
</dbReference>
<dbReference type="GO" id="GO:0070204">
    <property type="term" value="F:2-succinyl-5-enolpyruvyl-6-hydroxy-3-cyclohexene-1-carboxylic-acid synthase activity"/>
    <property type="evidence" value="ECO:0007669"/>
    <property type="project" value="UniProtKB-UniRule"/>
</dbReference>
<dbReference type="GO" id="GO:0000287">
    <property type="term" value="F:magnesium ion binding"/>
    <property type="evidence" value="ECO:0007669"/>
    <property type="project" value="UniProtKB-UniRule"/>
</dbReference>
<dbReference type="GO" id="GO:0030145">
    <property type="term" value="F:manganese ion binding"/>
    <property type="evidence" value="ECO:0007669"/>
    <property type="project" value="UniProtKB-UniRule"/>
</dbReference>
<dbReference type="GO" id="GO:0030976">
    <property type="term" value="F:thiamine pyrophosphate binding"/>
    <property type="evidence" value="ECO:0007669"/>
    <property type="project" value="UniProtKB-UniRule"/>
</dbReference>
<dbReference type="GO" id="GO:0009234">
    <property type="term" value="P:menaquinone biosynthetic process"/>
    <property type="evidence" value="ECO:0007669"/>
    <property type="project" value="UniProtKB-UniRule"/>
</dbReference>
<dbReference type="CDD" id="cd07037">
    <property type="entry name" value="TPP_PYR_MenD"/>
    <property type="match status" value="1"/>
</dbReference>
<dbReference type="CDD" id="cd02009">
    <property type="entry name" value="TPP_SHCHC_synthase"/>
    <property type="match status" value="1"/>
</dbReference>
<dbReference type="FunFam" id="3.40.50.970:FF:000066">
    <property type="entry name" value="2-succinyl-5-enolpyruvyl-6-hydroxy-3-cyclohexene-1-carboxylate synthase"/>
    <property type="match status" value="1"/>
</dbReference>
<dbReference type="Gene3D" id="3.40.50.970">
    <property type="match status" value="2"/>
</dbReference>
<dbReference type="Gene3D" id="3.40.50.1220">
    <property type="entry name" value="TPP-binding domain"/>
    <property type="match status" value="1"/>
</dbReference>
<dbReference type="HAMAP" id="MF_01659">
    <property type="entry name" value="MenD"/>
    <property type="match status" value="1"/>
</dbReference>
<dbReference type="InterPro" id="IPR004433">
    <property type="entry name" value="MenaQ_synth_MenD"/>
</dbReference>
<dbReference type="InterPro" id="IPR029061">
    <property type="entry name" value="THDP-binding"/>
</dbReference>
<dbReference type="InterPro" id="IPR012001">
    <property type="entry name" value="Thiamin_PyroP_enz_TPP-bd_dom"/>
</dbReference>
<dbReference type="NCBIfam" id="TIGR00173">
    <property type="entry name" value="menD"/>
    <property type="match status" value="1"/>
</dbReference>
<dbReference type="PANTHER" id="PTHR42916">
    <property type="entry name" value="2-SUCCINYL-5-ENOLPYRUVYL-6-HYDROXY-3-CYCLOHEXENE-1-CARBOXYLATE SYNTHASE"/>
    <property type="match status" value="1"/>
</dbReference>
<dbReference type="PANTHER" id="PTHR42916:SF1">
    <property type="entry name" value="PROTEIN PHYLLO, CHLOROPLASTIC"/>
    <property type="match status" value="1"/>
</dbReference>
<dbReference type="Pfam" id="PF02776">
    <property type="entry name" value="TPP_enzyme_N"/>
    <property type="match status" value="1"/>
</dbReference>
<dbReference type="PIRSF" id="PIRSF004983">
    <property type="entry name" value="MenD"/>
    <property type="match status" value="1"/>
</dbReference>
<dbReference type="SUPFAM" id="SSF52518">
    <property type="entry name" value="Thiamin diphosphate-binding fold (THDP-binding)"/>
    <property type="match status" value="2"/>
</dbReference>
<accession>A0PLU9</accession>
<gene>
    <name evidence="1" type="primary">menD</name>
    <name type="ordered locus">MUL_0654</name>
</gene>